<keyword id="KW-0040">ANK repeat</keyword>
<keyword id="KW-1185">Reference proteome</keyword>
<keyword id="KW-0677">Repeat</keyword>
<organism>
    <name type="scientific">Homo sapiens</name>
    <name type="common">Human</name>
    <dbReference type="NCBI Taxonomy" id="9606"/>
    <lineage>
        <taxon>Eukaryota</taxon>
        <taxon>Metazoa</taxon>
        <taxon>Chordata</taxon>
        <taxon>Craniata</taxon>
        <taxon>Vertebrata</taxon>
        <taxon>Euteleostomi</taxon>
        <taxon>Mammalia</taxon>
        <taxon>Eutheria</taxon>
        <taxon>Euarchontoglires</taxon>
        <taxon>Primates</taxon>
        <taxon>Haplorrhini</taxon>
        <taxon>Catarrhini</taxon>
        <taxon>Hominidae</taxon>
        <taxon>Homo</taxon>
    </lineage>
</organism>
<feature type="chain" id="PRO_0000332160" description="Ankyrin repeat and death domain-containing protein 1B">
    <location>
        <begin position="1"/>
        <end position="528"/>
    </location>
</feature>
<feature type="repeat" description="ANK 1">
    <location>
        <begin position="67"/>
        <end position="96"/>
    </location>
</feature>
<feature type="repeat" description="ANK 2">
    <location>
        <begin position="100"/>
        <end position="129"/>
    </location>
</feature>
<feature type="repeat" description="ANK 3">
    <location>
        <begin position="133"/>
        <end position="162"/>
    </location>
</feature>
<feature type="repeat" description="ANK 4">
    <location>
        <begin position="166"/>
        <end position="197"/>
    </location>
</feature>
<feature type="repeat" description="ANK 5">
    <location>
        <begin position="201"/>
        <end position="230"/>
    </location>
</feature>
<feature type="repeat" description="ANK 6">
    <location>
        <begin position="234"/>
        <end position="263"/>
    </location>
</feature>
<feature type="repeat" description="ANK 7">
    <location>
        <begin position="267"/>
        <end position="296"/>
    </location>
</feature>
<feature type="repeat" description="ANK 8">
    <location>
        <begin position="300"/>
        <end position="329"/>
    </location>
</feature>
<feature type="repeat" description="ANK 9">
    <location>
        <begin position="333"/>
        <end position="362"/>
    </location>
</feature>
<feature type="repeat" description="ANK 10">
    <location>
        <begin position="366"/>
        <end position="395"/>
    </location>
</feature>
<feature type="domain" description="Death" evidence="1">
    <location>
        <begin position="427"/>
        <end position="515"/>
    </location>
</feature>
<evidence type="ECO:0000255" key="1">
    <source>
        <dbReference type="PROSITE-ProRule" id="PRU00064"/>
    </source>
</evidence>
<dbReference type="EMBL" id="AC010245">
    <property type="status" value="NOT_ANNOTATED_CDS"/>
    <property type="molecule type" value="Genomic_DNA"/>
</dbReference>
<dbReference type="CCDS" id="CCDS64180.1"/>
<dbReference type="RefSeq" id="NP_001263642.1">
    <property type="nucleotide sequence ID" value="NM_001276713.2"/>
</dbReference>
<dbReference type="SMR" id="A6NHY2"/>
<dbReference type="BioGRID" id="609197">
    <property type="interactions" value="1"/>
</dbReference>
<dbReference type="FunCoup" id="A6NHY2">
    <property type="interactions" value="3"/>
</dbReference>
<dbReference type="STRING" id="9606.ENSP00000471417"/>
<dbReference type="GlyGen" id="A6NHY2">
    <property type="glycosylation" value="1 site, 1 O-linked glycan (1 site)"/>
</dbReference>
<dbReference type="iPTMnet" id="A6NHY2"/>
<dbReference type="PhosphoSitePlus" id="A6NHY2"/>
<dbReference type="BioMuta" id="ANKDD1B"/>
<dbReference type="jPOST" id="A6NHY2"/>
<dbReference type="PaxDb" id="9606-ENSP00000471417"/>
<dbReference type="ProteomicsDB" id="1232"/>
<dbReference type="Antibodypedia" id="71745">
    <property type="antibodies" value="53 antibodies from 11 providers"/>
</dbReference>
<dbReference type="DNASU" id="728780"/>
<dbReference type="Ensembl" id="ENST00000601380.4">
    <property type="protein sequence ID" value="ENSP00000471417.1"/>
    <property type="gene ID" value="ENSG00000189045.15"/>
</dbReference>
<dbReference type="GeneID" id="728780"/>
<dbReference type="KEGG" id="hsa:728780"/>
<dbReference type="MANE-Select" id="ENST00000601380.4">
    <property type="protein sequence ID" value="ENSP00000471417.1"/>
    <property type="RefSeq nucleotide sequence ID" value="NM_001276713.2"/>
    <property type="RefSeq protein sequence ID" value="NP_001263642.1"/>
</dbReference>
<dbReference type="UCSC" id="uc031ski.2">
    <property type="organism name" value="human"/>
</dbReference>
<dbReference type="AGR" id="HGNC:32525"/>
<dbReference type="CTD" id="728780"/>
<dbReference type="DisGeNET" id="728780"/>
<dbReference type="GeneCards" id="ANKDD1B"/>
<dbReference type="HGNC" id="HGNC:32525">
    <property type="gene designation" value="ANKDD1B"/>
</dbReference>
<dbReference type="HPA" id="ENSG00000189045">
    <property type="expression patterns" value="Tissue enhanced (fallopian tube, intestine, kidney)"/>
</dbReference>
<dbReference type="MIM" id="619920">
    <property type="type" value="gene"/>
</dbReference>
<dbReference type="neXtProt" id="NX_A6NHY2"/>
<dbReference type="OpenTargets" id="ENSG00000189045"/>
<dbReference type="VEuPathDB" id="HostDB:ENSG00000189045"/>
<dbReference type="eggNOG" id="KOG4177">
    <property type="taxonomic scope" value="Eukaryota"/>
</dbReference>
<dbReference type="GeneTree" id="ENSGT00940000154170"/>
<dbReference type="HOGENOM" id="CLU_000134_51_1_1"/>
<dbReference type="InParanoid" id="A6NHY2"/>
<dbReference type="OMA" id="SYQEHGN"/>
<dbReference type="OrthoDB" id="448455at2759"/>
<dbReference type="PAN-GO" id="A6NHY2">
    <property type="GO annotations" value="0 GO annotations based on evolutionary models"/>
</dbReference>
<dbReference type="PhylomeDB" id="A6NHY2"/>
<dbReference type="PathwayCommons" id="A6NHY2"/>
<dbReference type="SignaLink" id="A6NHY2"/>
<dbReference type="BioGRID-ORCS" id="728780">
    <property type="hits" value="10 hits in 1114 CRISPR screens"/>
</dbReference>
<dbReference type="ChiTaRS" id="ANKDD1B">
    <property type="organism name" value="human"/>
</dbReference>
<dbReference type="GenomeRNAi" id="728780"/>
<dbReference type="Pharos" id="A6NHY2">
    <property type="development level" value="Tdark"/>
</dbReference>
<dbReference type="PRO" id="PR:A6NHY2"/>
<dbReference type="Proteomes" id="UP000005640">
    <property type="component" value="Chromosome 5"/>
</dbReference>
<dbReference type="RNAct" id="A6NHY2">
    <property type="molecule type" value="protein"/>
</dbReference>
<dbReference type="Bgee" id="ENSG00000189045">
    <property type="expression patterns" value="Expressed in right uterine tube and 97 other cell types or tissues"/>
</dbReference>
<dbReference type="ExpressionAtlas" id="A6NHY2">
    <property type="expression patterns" value="baseline and differential"/>
</dbReference>
<dbReference type="GO" id="GO:0007165">
    <property type="term" value="P:signal transduction"/>
    <property type="evidence" value="ECO:0007669"/>
    <property type="project" value="InterPro"/>
</dbReference>
<dbReference type="CDD" id="cd01670">
    <property type="entry name" value="Death"/>
    <property type="match status" value="1"/>
</dbReference>
<dbReference type="Gene3D" id="1.25.40.20">
    <property type="entry name" value="Ankyrin repeat-containing domain"/>
    <property type="match status" value="3"/>
</dbReference>
<dbReference type="Gene3D" id="1.10.533.10">
    <property type="entry name" value="Death Domain, Fas"/>
    <property type="match status" value="1"/>
</dbReference>
<dbReference type="InterPro" id="IPR052457">
    <property type="entry name" value="Ankyrin-DD_containing_protein"/>
</dbReference>
<dbReference type="InterPro" id="IPR002110">
    <property type="entry name" value="Ankyrin_rpt"/>
</dbReference>
<dbReference type="InterPro" id="IPR036770">
    <property type="entry name" value="Ankyrin_rpt-contain_sf"/>
</dbReference>
<dbReference type="InterPro" id="IPR011029">
    <property type="entry name" value="DEATH-like_dom_sf"/>
</dbReference>
<dbReference type="InterPro" id="IPR000488">
    <property type="entry name" value="Death_dom"/>
</dbReference>
<dbReference type="PANTHER" id="PTHR24125">
    <property type="entry name" value="ANKYRIN REPEAT AND DEATH DOMAIN-CONTAINING PROTEIN"/>
    <property type="match status" value="1"/>
</dbReference>
<dbReference type="PANTHER" id="PTHR24125:SF1">
    <property type="entry name" value="ANKYRIN REPEAT AND DEATH DOMAIN-CONTAINING PROTEIN 1B"/>
    <property type="match status" value="1"/>
</dbReference>
<dbReference type="Pfam" id="PF00023">
    <property type="entry name" value="Ank"/>
    <property type="match status" value="1"/>
</dbReference>
<dbReference type="Pfam" id="PF12796">
    <property type="entry name" value="Ank_2"/>
    <property type="match status" value="3"/>
</dbReference>
<dbReference type="PRINTS" id="PR01415">
    <property type="entry name" value="ANKYRIN"/>
</dbReference>
<dbReference type="SMART" id="SM00248">
    <property type="entry name" value="ANK"/>
    <property type="match status" value="10"/>
</dbReference>
<dbReference type="SUPFAM" id="SSF48403">
    <property type="entry name" value="Ankyrin repeat"/>
    <property type="match status" value="1"/>
</dbReference>
<dbReference type="SUPFAM" id="SSF47986">
    <property type="entry name" value="DEATH domain"/>
    <property type="match status" value="1"/>
</dbReference>
<dbReference type="PROSITE" id="PS50297">
    <property type="entry name" value="ANK_REP_REGION"/>
    <property type="match status" value="1"/>
</dbReference>
<dbReference type="PROSITE" id="PS50088">
    <property type="entry name" value="ANK_REPEAT"/>
    <property type="match status" value="6"/>
</dbReference>
<dbReference type="PROSITE" id="PS50017">
    <property type="entry name" value="DEATH_DOMAIN"/>
    <property type="match status" value="1"/>
</dbReference>
<accession>A6NHY2</accession>
<name>AKD1B_HUMAN</name>
<protein>
    <recommendedName>
        <fullName>Ankyrin repeat and death domain-containing protein 1B</fullName>
    </recommendedName>
</protein>
<proteinExistence type="predicted"/>
<gene>
    <name type="primary">ANKDD1B</name>
</gene>
<reference key="1">
    <citation type="journal article" date="2004" name="Nature">
        <title>The DNA sequence and comparative analysis of human chromosome 5.</title>
        <authorList>
            <person name="Schmutz J."/>
            <person name="Martin J."/>
            <person name="Terry A."/>
            <person name="Couronne O."/>
            <person name="Grimwood J."/>
            <person name="Lowry S."/>
            <person name="Gordon L.A."/>
            <person name="Scott D."/>
            <person name="Xie G."/>
            <person name="Huang W."/>
            <person name="Hellsten U."/>
            <person name="Tran-Gyamfi M."/>
            <person name="She X."/>
            <person name="Prabhakar S."/>
            <person name="Aerts A."/>
            <person name="Altherr M."/>
            <person name="Bajorek E."/>
            <person name="Black S."/>
            <person name="Branscomb E."/>
            <person name="Caoile C."/>
            <person name="Challacombe J.F."/>
            <person name="Chan Y.M."/>
            <person name="Denys M."/>
            <person name="Detter J.C."/>
            <person name="Escobar J."/>
            <person name="Flowers D."/>
            <person name="Fotopulos D."/>
            <person name="Glavina T."/>
            <person name="Gomez M."/>
            <person name="Gonzales E."/>
            <person name="Goodstein D."/>
            <person name="Grigoriev I."/>
            <person name="Groza M."/>
            <person name="Hammon N."/>
            <person name="Hawkins T."/>
            <person name="Haydu L."/>
            <person name="Israni S."/>
            <person name="Jett J."/>
            <person name="Kadner K."/>
            <person name="Kimball H."/>
            <person name="Kobayashi A."/>
            <person name="Lopez F."/>
            <person name="Lou Y."/>
            <person name="Martinez D."/>
            <person name="Medina C."/>
            <person name="Morgan J."/>
            <person name="Nandkeshwar R."/>
            <person name="Noonan J.P."/>
            <person name="Pitluck S."/>
            <person name="Pollard M."/>
            <person name="Predki P."/>
            <person name="Priest J."/>
            <person name="Ramirez L."/>
            <person name="Retterer J."/>
            <person name="Rodriguez A."/>
            <person name="Rogers S."/>
            <person name="Salamov A."/>
            <person name="Salazar A."/>
            <person name="Thayer N."/>
            <person name="Tice H."/>
            <person name="Tsai M."/>
            <person name="Ustaszewska A."/>
            <person name="Vo N."/>
            <person name="Wheeler J."/>
            <person name="Wu K."/>
            <person name="Yang J."/>
            <person name="Dickson M."/>
            <person name="Cheng J.-F."/>
            <person name="Eichler E.E."/>
            <person name="Olsen A."/>
            <person name="Pennacchio L.A."/>
            <person name="Rokhsar D.S."/>
            <person name="Richardson P."/>
            <person name="Lucas S.M."/>
            <person name="Myers R.M."/>
            <person name="Rubin E.M."/>
        </authorList>
    </citation>
    <scope>NUCLEOTIDE SEQUENCE [LARGE SCALE GENOMIC DNA]</scope>
</reference>
<sequence>MDPAGRARGQGATAGGLLLRAAAAAKGLREDLWGAAALPWRSLSRIPKREGLGEEDTAVAGHELLLPNERSFQNAAKSNNLDLMEKLFEKKVNINVVNNMNRTALHFAVGRNHLSAVDFLLKHKARVDVADKHGLTVIHLAAWSGSLEVMLMLVKAGADQRAKNQDGMSALHFATQSNHVRIVEYLIQDLHLKDLNQPDEKGRKPFLLAAERGHVEMIEKLTFLNLHTSEKDKGGNTALHLAAKHGHSPAVQVLLAQWQDINEMNELNISSLQIATRNGHASLVNFLLSENVDLHQKVEPKESPLHLVVINNHITVVNSLLSAQHDIDILNQKQQTPLHVAADRGNVELVETLLKAGCDLKAVDKQGKTALAVASRSNHSLVVGMLIKAERYYAWREEHHESIRDPSTGFTLTFKQDHSLETRHIRTLLWDLAYHQLKANEWQRLARSWNFTDDQIRAIEEQWSGNESFREHGHRALLIWLHGTLMTQGDPAKQLYEELVHAGFPKLAEKTRHFKSKTDSNSKKCVVS</sequence>